<feature type="chain" id="PRO_1000119473" description="RNA pyrophosphohydrolase">
    <location>
        <begin position="1"/>
        <end position="176"/>
    </location>
</feature>
<feature type="domain" description="Nudix hydrolase" evidence="1">
    <location>
        <begin position="6"/>
        <end position="149"/>
    </location>
</feature>
<feature type="short sequence motif" description="Nudix box">
    <location>
        <begin position="38"/>
        <end position="59"/>
    </location>
</feature>
<sequence>MIDDDGYRPNVGIVICNRQGQVMWARRFGQHSWQFPQGGINPGESAEQAMYRELFEEVGLSRKDVRILASTRNWLRYKLPKRLVRWDTKPVCIGQKQKWFLLQLVSGDAEINMQTSSTPEFDGWRWVSYWYPVRQVVSFKRDVYRRVMKEFASVVMSLQENTPKPQNASAYRRKRG</sequence>
<evidence type="ECO:0000255" key="1">
    <source>
        <dbReference type="HAMAP-Rule" id="MF_00298"/>
    </source>
</evidence>
<name>RPPH_ECOLU</name>
<gene>
    <name evidence="1" type="primary">rppH</name>
    <name evidence="1" type="synonym">nudH</name>
    <name type="ordered locus">ECUMN_3157</name>
</gene>
<proteinExistence type="inferred from homology"/>
<organism>
    <name type="scientific">Escherichia coli O17:K52:H18 (strain UMN026 / ExPEC)</name>
    <dbReference type="NCBI Taxonomy" id="585056"/>
    <lineage>
        <taxon>Bacteria</taxon>
        <taxon>Pseudomonadati</taxon>
        <taxon>Pseudomonadota</taxon>
        <taxon>Gammaproteobacteria</taxon>
        <taxon>Enterobacterales</taxon>
        <taxon>Enterobacteriaceae</taxon>
        <taxon>Escherichia</taxon>
    </lineage>
</organism>
<accession>B7N762</accession>
<comment type="function">
    <text evidence="1">Accelerates the degradation of transcripts by removing pyrophosphate from the 5'-end of triphosphorylated RNA, leading to a more labile monophosphorylated state that can stimulate subsequent ribonuclease cleavage.</text>
</comment>
<comment type="cofactor">
    <cofactor evidence="1">
        <name>a divalent metal cation</name>
        <dbReference type="ChEBI" id="CHEBI:60240"/>
    </cofactor>
</comment>
<comment type="similarity">
    <text evidence="1">Belongs to the Nudix hydrolase family. RppH subfamily.</text>
</comment>
<dbReference type="EC" id="3.6.1.-" evidence="1"/>
<dbReference type="EMBL" id="CU928163">
    <property type="protein sequence ID" value="CAR14323.1"/>
    <property type="molecule type" value="Genomic_DNA"/>
</dbReference>
<dbReference type="RefSeq" id="WP_000564489.1">
    <property type="nucleotide sequence ID" value="NC_011751.1"/>
</dbReference>
<dbReference type="RefSeq" id="YP_002413843.1">
    <property type="nucleotide sequence ID" value="NC_011751.1"/>
</dbReference>
<dbReference type="SMR" id="B7N762"/>
<dbReference type="STRING" id="585056.ECUMN_3157"/>
<dbReference type="GeneID" id="75203778"/>
<dbReference type="KEGG" id="eum:ECUMN_3157"/>
<dbReference type="PATRIC" id="fig|585056.7.peg.3339"/>
<dbReference type="HOGENOM" id="CLU_087195_3_2_6"/>
<dbReference type="Proteomes" id="UP000007097">
    <property type="component" value="Chromosome"/>
</dbReference>
<dbReference type="GO" id="GO:0005737">
    <property type="term" value="C:cytoplasm"/>
    <property type="evidence" value="ECO:0007669"/>
    <property type="project" value="TreeGrafter"/>
</dbReference>
<dbReference type="GO" id="GO:0034353">
    <property type="term" value="F:mRNA 5'-diphosphatase activity"/>
    <property type="evidence" value="ECO:0007669"/>
    <property type="project" value="TreeGrafter"/>
</dbReference>
<dbReference type="GO" id="GO:0006402">
    <property type="term" value="P:mRNA catabolic process"/>
    <property type="evidence" value="ECO:0007669"/>
    <property type="project" value="TreeGrafter"/>
</dbReference>
<dbReference type="CDD" id="cd03671">
    <property type="entry name" value="NUDIX_Ap4A_hydrolase_plant_like"/>
    <property type="match status" value="1"/>
</dbReference>
<dbReference type="FunFam" id="3.90.79.10:FF:000001">
    <property type="entry name" value="RNA pyrophosphohydrolase"/>
    <property type="match status" value="1"/>
</dbReference>
<dbReference type="Gene3D" id="3.90.79.10">
    <property type="entry name" value="Nucleoside Triphosphate Pyrophosphohydrolase"/>
    <property type="match status" value="1"/>
</dbReference>
<dbReference type="HAMAP" id="MF_00298">
    <property type="entry name" value="Nudix_RppH"/>
    <property type="match status" value="1"/>
</dbReference>
<dbReference type="InterPro" id="IPR020476">
    <property type="entry name" value="Nudix_hydrolase"/>
</dbReference>
<dbReference type="InterPro" id="IPR015797">
    <property type="entry name" value="NUDIX_hydrolase-like_dom_sf"/>
</dbReference>
<dbReference type="InterPro" id="IPR020084">
    <property type="entry name" value="NUDIX_hydrolase_CS"/>
</dbReference>
<dbReference type="InterPro" id="IPR000086">
    <property type="entry name" value="NUDIX_hydrolase_dom"/>
</dbReference>
<dbReference type="InterPro" id="IPR022927">
    <property type="entry name" value="RppH"/>
</dbReference>
<dbReference type="NCBIfam" id="NF001934">
    <property type="entry name" value="PRK00714.1-1"/>
    <property type="match status" value="1"/>
</dbReference>
<dbReference type="NCBIfam" id="NF001937">
    <property type="entry name" value="PRK00714.1-4"/>
    <property type="match status" value="1"/>
</dbReference>
<dbReference type="NCBIfam" id="NF001938">
    <property type="entry name" value="PRK00714.1-5"/>
    <property type="match status" value="1"/>
</dbReference>
<dbReference type="PANTHER" id="PTHR23114">
    <property type="entry name" value="M7GPPPN-MRNA HYDROLASE"/>
    <property type="match status" value="1"/>
</dbReference>
<dbReference type="PANTHER" id="PTHR23114:SF17">
    <property type="entry name" value="M7GPPPN-MRNA HYDROLASE"/>
    <property type="match status" value="1"/>
</dbReference>
<dbReference type="Pfam" id="PF00293">
    <property type="entry name" value="NUDIX"/>
    <property type="match status" value="1"/>
</dbReference>
<dbReference type="PRINTS" id="PR00502">
    <property type="entry name" value="NUDIXFAMILY"/>
</dbReference>
<dbReference type="SUPFAM" id="SSF55811">
    <property type="entry name" value="Nudix"/>
    <property type="match status" value="1"/>
</dbReference>
<dbReference type="PROSITE" id="PS51462">
    <property type="entry name" value="NUDIX"/>
    <property type="match status" value="1"/>
</dbReference>
<dbReference type="PROSITE" id="PS00893">
    <property type="entry name" value="NUDIX_BOX"/>
    <property type="match status" value="1"/>
</dbReference>
<keyword id="KW-0378">Hydrolase</keyword>
<reference key="1">
    <citation type="journal article" date="2009" name="PLoS Genet.">
        <title>Organised genome dynamics in the Escherichia coli species results in highly diverse adaptive paths.</title>
        <authorList>
            <person name="Touchon M."/>
            <person name="Hoede C."/>
            <person name="Tenaillon O."/>
            <person name="Barbe V."/>
            <person name="Baeriswyl S."/>
            <person name="Bidet P."/>
            <person name="Bingen E."/>
            <person name="Bonacorsi S."/>
            <person name="Bouchier C."/>
            <person name="Bouvet O."/>
            <person name="Calteau A."/>
            <person name="Chiapello H."/>
            <person name="Clermont O."/>
            <person name="Cruveiller S."/>
            <person name="Danchin A."/>
            <person name="Diard M."/>
            <person name="Dossat C."/>
            <person name="Karoui M.E."/>
            <person name="Frapy E."/>
            <person name="Garry L."/>
            <person name="Ghigo J.M."/>
            <person name="Gilles A.M."/>
            <person name="Johnson J."/>
            <person name="Le Bouguenec C."/>
            <person name="Lescat M."/>
            <person name="Mangenot S."/>
            <person name="Martinez-Jehanne V."/>
            <person name="Matic I."/>
            <person name="Nassif X."/>
            <person name="Oztas S."/>
            <person name="Petit M.A."/>
            <person name="Pichon C."/>
            <person name="Rouy Z."/>
            <person name="Ruf C.S."/>
            <person name="Schneider D."/>
            <person name="Tourret J."/>
            <person name="Vacherie B."/>
            <person name="Vallenet D."/>
            <person name="Medigue C."/>
            <person name="Rocha E.P.C."/>
            <person name="Denamur E."/>
        </authorList>
    </citation>
    <scope>NUCLEOTIDE SEQUENCE [LARGE SCALE GENOMIC DNA]</scope>
    <source>
        <strain>UMN026 / ExPEC</strain>
    </source>
</reference>
<protein>
    <recommendedName>
        <fullName evidence="1">RNA pyrophosphohydrolase</fullName>
        <ecNumber evidence="1">3.6.1.-</ecNumber>
    </recommendedName>
    <alternativeName>
        <fullName evidence="1">(Di)nucleoside polyphosphate hydrolase</fullName>
    </alternativeName>
</protein>